<protein>
    <recommendedName>
        <fullName evidence="1">ATP synthase subunit c</fullName>
    </recommendedName>
    <alternativeName>
        <fullName evidence="1">ATP synthase F(0) sector subunit c</fullName>
    </alternativeName>
    <alternativeName>
        <fullName evidence="1">F-type ATPase subunit c</fullName>
        <shortName evidence="1">F-ATPase subunit c</shortName>
    </alternativeName>
    <alternativeName>
        <fullName evidence="1">Lipid-binding protein</fullName>
    </alternativeName>
</protein>
<feature type="chain" id="PRO_1000184462" description="ATP synthase subunit c">
    <location>
        <begin position="1"/>
        <end position="79"/>
    </location>
</feature>
<feature type="transmembrane region" description="Helical" evidence="1">
    <location>
        <begin position="11"/>
        <end position="31"/>
    </location>
</feature>
<feature type="transmembrane region" description="Helical" evidence="1">
    <location>
        <begin position="53"/>
        <end position="73"/>
    </location>
</feature>
<feature type="site" description="Reversibly protonated during proton transport" evidence="1">
    <location>
        <position position="61"/>
    </location>
</feature>
<name>ATPL_SALPB</name>
<organism>
    <name type="scientific">Salmonella paratyphi B (strain ATCC BAA-1250 / SPB7)</name>
    <dbReference type="NCBI Taxonomy" id="1016998"/>
    <lineage>
        <taxon>Bacteria</taxon>
        <taxon>Pseudomonadati</taxon>
        <taxon>Pseudomonadota</taxon>
        <taxon>Gammaproteobacteria</taxon>
        <taxon>Enterobacterales</taxon>
        <taxon>Enterobacteriaceae</taxon>
        <taxon>Salmonella</taxon>
    </lineage>
</organism>
<gene>
    <name evidence="1" type="primary">atpE</name>
    <name type="ordered locus">SPAB_04811</name>
</gene>
<dbReference type="EMBL" id="CP000886">
    <property type="protein sequence ID" value="ABX70122.1"/>
    <property type="molecule type" value="Genomic_DNA"/>
</dbReference>
<dbReference type="RefSeq" id="WP_000429386.1">
    <property type="nucleotide sequence ID" value="NC_010102.1"/>
</dbReference>
<dbReference type="SMR" id="A9MXB1"/>
<dbReference type="GeneID" id="98390858"/>
<dbReference type="KEGG" id="spq:SPAB_04811"/>
<dbReference type="PATRIC" id="fig|1016998.12.peg.4526"/>
<dbReference type="HOGENOM" id="CLU_148047_1_0_6"/>
<dbReference type="BioCyc" id="SENT1016998:SPAB_RS19540-MONOMER"/>
<dbReference type="Proteomes" id="UP000008556">
    <property type="component" value="Chromosome"/>
</dbReference>
<dbReference type="GO" id="GO:0005886">
    <property type="term" value="C:plasma membrane"/>
    <property type="evidence" value="ECO:0007669"/>
    <property type="project" value="UniProtKB-SubCell"/>
</dbReference>
<dbReference type="GO" id="GO:0045259">
    <property type="term" value="C:proton-transporting ATP synthase complex"/>
    <property type="evidence" value="ECO:0007669"/>
    <property type="project" value="UniProtKB-KW"/>
</dbReference>
<dbReference type="GO" id="GO:0033177">
    <property type="term" value="C:proton-transporting two-sector ATPase complex, proton-transporting domain"/>
    <property type="evidence" value="ECO:0007669"/>
    <property type="project" value="InterPro"/>
</dbReference>
<dbReference type="GO" id="GO:0008289">
    <property type="term" value="F:lipid binding"/>
    <property type="evidence" value="ECO:0007669"/>
    <property type="project" value="UniProtKB-KW"/>
</dbReference>
<dbReference type="GO" id="GO:0046933">
    <property type="term" value="F:proton-transporting ATP synthase activity, rotational mechanism"/>
    <property type="evidence" value="ECO:0007669"/>
    <property type="project" value="UniProtKB-UniRule"/>
</dbReference>
<dbReference type="CDD" id="cd18185">
    <property type="entry name" value="ATP-synt_Fo_c_ATPE"/>
    <property type="match status" value="1"/>
</dbReference>
<dbReference type="FunFam" id="1.20.20.10:FF:000002">
    <property type="entry name" value="ATP synthase subunit c"/>
    <property type="match status" value="1"/>
</dbReference>
<dbReference type="Gene3D" id="1.20.20.10">
    <property type="entry name" value="F1F0 ATP synthase subunit C"/>
    <property type="match status" value="1"/>
</dbReference>
<dbReference type="HAMAP" id="MF_01396">
    <property type="entry name" value="ATP_synth_c_bact"/>
    <property type="match status" value="1"/>
</dbReference>
<dbReference type="InterPro" id="IPR005953">
    <property type="entry name" value="ATP_synth_csu_bac/chlpt"/>
</dbReference>
<dbReference type="InterPro" id="IPR000454">
    <property type="entry name" value="ATP_synth_F0_csu"/>
</dbReference>
<dbReference type="InterPro" id="IPR020537">
    <property type="entry name" value="ATP_synth_F0_csu_DDCD_BS"/>
</dbReference>
<dbReference type="InterPro" id="IPR038662">
    <property type="entry name" value="ATP_synth_F0_csu_sf"/>
</dbReference>
<dbReference type="InterPro" id="IPR002379">
    <property type="entry name" value="ATPase_proteolipid_c-like_dom"/>
</dbReference>
<dbReference type="InterPro" id="IPR035921">
    <property type="entry name" value="F/V-ATP_Csub_sf"/>
</dbReference>
<dbReference type="NCBIfam" id="TIGR01260">
    <property type="entry name" value="ATP_synt_c"/>
    <property type="match status" value="1"/>
</dbReference>
<dbReference type="NCBIfam" id="NF005363">
    <property type="entry name" value="PRK06876.1"/>
    <property type="match status" value="1"/>
</dbReference>
<dbReference type="Pfam" id="PF00137">
    <property type="entry name" value="ATP-synt_C"/>
    <property type="match status" value="1"/>
</dbReference>
<dbReference type="PRINTS" id="PR00124">
    <property type="entry name" value="ATPASEC"/>
</dbReference>
<dbReference type="SUPFAM" id="SSF81333">
    <property type="entry name" value="F1F0 ATP synthase subunit C"/>
    <property type="match status" value="1"/>
</dbReference>
<dbReference type="PROSITE" id="PS00605">
    <property type="entry name" value="ATPASE_C"/>
    <property type="match status" value="1"/>
</dbReference>
<comment type="function">
    <text evidence="1">F(1)F(0) ATP synthase produces ATP from ADP in the presence of a proton or sodium gradient. F-type ATPases consist of two structural domains, F(1) containing the extramembraneous catalytic core and F(0) containing the membrane proton channel, linked together by a central stalk and a peripheral stalk. During catalysis, ATP synthesis in the catalytic domain of F(1) is coupled via a rotary mechanism of the central stalk subunits to proton translocation.</text>
</comment>
<comment type="function">
    <text evidence="1">Key component of the F(0) channel; it plays a direct role in translocation across the membrane. A homomeric c-ring of between 10-14 subunits forms the central stalk rotor element with the F(1) delta and epsilon subunits.</text>
</comment>
<comment type="subunit">
    <text evidence="1">F-type ATPases have 2 components, F(1) - the catalytic core - and F(0) - the membrane proton channel. F(1) has five subunits: alpha(3), beta(3), gamma(1), delta(1), epsilon(1). F(0) has three main subunits: a(1), b(2) and c(10-14). The alpha and beta chains form an alternating ring which encloses part of the gamma chain. F(1) is attached to F(0) by a central stalk formed by the gamma and epsilon chains, while a peripheral stalk is formed by the delta and b chains.</text>
</comment>
<comment type="subcellular location">
    <subcellularLocation>
        <location evidence="1">Cell inner membrane</location>
        <topology evidence="1">Multi-pass membrane protein</topology>
    </subcellularLocation>
</comment>
<comment type="similarity">
    <text evidence="1">Belongs to the ATPase C chain family.</text>
</comment>
<reference key="1">
    <citation type="submission" date="2007-11" db="EMBL/GenBank/DDBJ databases">
        <authorList>
            <consortium name="The Salmonella enterica serovar Paratyphi B Genome Sequencing Project"/>
            <person name="McClelland M."/>
            <person name="Sanderson E.K."/>
            <person name="Porwollik S."/>
            <person name="Spieth J."/>
            <person name="Clifton W.S."/>
            <person name="Fulton R."/>
            <person name="Cordes M."/>
            <person name="Wollam A."/>
            <person name="Shah N."/>
            <person name="Pepin K."/>
            <person name="Bhonagiri V."/>
            <person name="Nash W."/>
            <person name="Johnson M."/>
            <person name="Thiruvilangam P."/>
            <person name="Wilson R."/>
        </authorList>
    </citation>
    <scope>NUCLEOTIDE SEQUENCE [LARGE SCALE GENOMIC DNA]</scope>
    <source>
        <strain>ATCC BAA-1250 / SPB7</strain>
    </source>
</reference>
<proteinExistence type="inferred from homology"/>
<evidence type="ECO:0000255" key="1">
    <source>
        <dbReference type="HAMAP-Rule" id="MF_01396"/>
    </source>
</evidence>
<accession>A9MXB1</accession>
<sequence length="79" mass="8256">MENLNMDLLYMAAAVMMGLAAIGAAIGIGILGGKFLEGAARQPDLIPLLRTQFFIVMGLVDAIPMIAVGLGLYVMFAVA</sequence>
<keyword id="KW-0066">ATP synthesis</keyword>
<keyword id="KW-0997">Cell inner membrane</keyword>
<keyword id="KW-1003">Cell membrane</keyword>
<keyword id="KW-0138">CF(0)</keyword>
<keyword id="KW-0375">Hydrogen ion transport</keyword>
<keyword id="KW-0406">Ion transport</keyword>
<keyword id="KW-0446">Lipid-binding</keyword>
<keyword id="KW-0472">Membrane</keyword>
<keyword id="KW-0812">Transmembrane</keyword>
<keyword id="KW-1133">Transmembrane helix</keyword>
<keyword id="KW-0813">Transport</keyword>